<feature type="chain" id="PRO_0000188444" description="Glycerol-3-phosphate acyltransferase">
    <location>
        <begin position="1"/>
        <end position="205"/>
    </location>
</feature>
<feature type="topological domain" description="Periplasmic" evidence="1">
    <location>
        <begin position="1"/>
        <end position="3"/>
    </location>
</feature>
<feature type="transmembrane region" description="Helical" evidence="1">
    <location>
        <begin position="4"/>
        <end position="24"/>
    </location>
</feature>
<feature type="topological domain" description="Cytoplasmic" evidence="1">
    <location>
        <begin position="25"/>
        <end position="52"/>
    </location>
</feature>
<feature type="transmembrane region" description="Helical" evidence="1">
    <location>
        <begin position="53"/>
        <end position="73"/>
    </location>
</feature>
<feature type="topological domain" description="Periplasmic" evidence="1">
    <location>
        <begin position="74"/>
        <end position="80"/>
    </location>
</feature>
<feature type="transmembrane region" description="Helical" evidence="1">
    <location>
        <begin position="81"/>
        <end position="101"/>
    </location>
</feature>
<feature type="topological domain" description="Cytoplasmic" evidence="1">
    <location>
        <begin position="102"/>
        <end position="111"/>
    </location>
</feature>
<feature type="transmembrane region" description="Helical" evidence="1">
    <location>
        <begin position="112"/>
        <end position="132"/>
    </location>
</feature>
<feature type="topological domain" description="Periplasmic" evidence="1">
    <location>
        <begin position="133"/>
        <end position="137"/>
    </location>
</feature>
<feature type="transmembrane region" description="Helical" evidence="1">
    <location>
        <begin position="138"/>
        <end position="158"/>
    </location>
</feature>
<feature type="topological domain" description="Cytoplasmic" evidence="1">
    <location>
        <begin position="159"/>
        <end position="205"/>
    </location>
</feature>
<keyword id="KW-0997">Cell inner membrane</keyword>
<keyword id="KW-1003">Cell membrane</keyword>
<keyword id="KW-0444">Lipid biosynthesis</keyword>
<keyword id="KW-0443">Lipid metabolism</keyword>
<keyword id="KW-0472">Membrane</keyword>
<keyword id="KW-0594">Phospholipid biosynthesis</keyword>
<keyword id="KW-1208">Phospholipid metabolism</keyword>
<keyword id="KW-0808">Transferase</keyword>
<keyword id="KW-0812">Transmembrane</keyword>
<keyword id="KW-1133">Transmembrane helix</keyword>
<protein>
    <recommendedName>
        <fullName evidence="1">Glycerol-3-phosphate acyltransferase</fullName>
    </recommendedName>
    <alternativeName>
        <fullName evidence="1">G3P acyltransferase</fullName>
        <shortName evidence="1">GPAT</shortName>
        <ecNumber evidence="1">2.3.1.15</ecNumber>
        <ecNumber evidence="1">2.3.1.n5</ecNumber>
    </alternativeName>
    <alternativeName>
        <fullName evidence="1">Lysophosphatidic acid synthase</fullName>
        <shortName evidence="1">LPA synthase</shortName>
    </alternativeName>
</protein>
<name>PLSY_SHIBS</name>
<reference key="1">
    <citation type="journal article" date="2005" name="Nucleic Acids Res.">
        <title>Genome dynamics and diversity of Shigella species, the etiologic agents of bacillary dysentery.</title>
        <authorList>
            <person name="Yang F."/>
            <person name="Yang J."/>
            <person name="Zhang X."/>
            <person name="Chen L."/>
            <person name="Jiang Y."/>
            <person name="Yan Y."/>
            <person name="Tang X."/>
            <person name="Wang J."/>
            <person name="Xiong Z."/>
            <person name="Dong J."/>
            <person name="Xue Y."/>
            <person name="Zhu Y."/>
            <person name="Xu X."/>
            <person name="Sun L."/>
            <person name="Chen S."/>
            <person name="Nie H."/>
            <person name="Peng J."/>
            <person name="Xu J."/>
            <person name="Wang Y."/>
            <person name="Yuan Z."/>
            <person name="Wen Y."/>
            <person name="Yao Z."/>
            <person name="Shen Y."/>
            <person name="Qiang B."/>
            <person name="Hou Y."/>
            <person name="Yu J."/>
            <person name="Jin Q."/>
        </authorList>
    </citation>
    <scope>NUCLEOTIDE SEQUENCE [LARGE SCALE GENOMIC DNA]</scope>
    <source>
        <strain>Sb227</strain>
    </source>
</reference>
<organism>
    <name type="scientific">Shigella boydii serotype 4 (strain Sb227)</name>
    <dbReference type="NCBI Taxonomy" id="300268"/>
    <lineage>
        <taxon>Bacteria</taxon>
        <taxon>Pseudomonadati</taxon>
        <taxon>Pseudomonadota</taxon>
        <taxon>Gammaproteobacteria</taxon>
        <taxon>Enterobacterales</taxon>
        <taxon>Enterobacteriaceae</taxon>
        <taxon>Shigella</taxon>
    </lineage>
</organism>
<accession>Q31WX6</accession>
<dbReference type="EC" id="2.3.1.15" evidence="1"/>
<dbReference type="EC" id="2.3.1.n5" evidence="1"/>
<dbReference type="EMBL" id="CP000036">
    <property type="protein sequence ID" value="ABB67432.1"/>
    <property type="molecule type" value="Genomic_DNA"/>
</dbReference>
<dbReference type="RefSeq" id="WP_001272796.1">
    <property type="nucleotide sequence ID" value="NC_007613.1"/>
</dbReference>
<dbReference type="SMR" id="Q31WX6"/>
<dbReference type="GeneID" id="93778934"/>
<dbReference type="KEGG" id="sbo:SBO_2915"/>
<dbReference type="HOGENOM" id="CLU_081254_0_2_6"/>
<dbReference type="UniPathway" id="UPA00085"/>
<dbReference type="Proteomes" id="UP000007067">
    <property type="component" value="Chromosome"/>
</dbReference>
<dbReference type="GO" id="GO:0005886">
    <property type="term" value="C:plasma membrane"/>
    <property type="evidence" value="ECO:0007669"/>
    <property type="project" value="UniProtKB-SubCell"/>
</dbReference>
<dbReference type="GO" id="GO:0043772">
    <property type="term" value="F:acyl-phosphate glycerol-3-phosphate acyltransferase activity"/>
    <property type="evidence" value="ECO:0007669"/>
    <property type="project" value="InterPro"/>
</dbReference>
<dbReference type="GO" id="GO:0004366">
    <property type="term" value="F:glycerol-3-phosphate O-acyltransferase activity"/>
    <property type="evidence" value="ECO:0007669"/>
    <property type="project" value="UniProtKB-UniRule"/>
</dbReference>
<dbReference type="GO" id="GO:0008654">
    <property type="term" value="P:phospholipid biosynthetic process"/>
    <property type="evidence" value="ECO:0007669"/>
    <property type="project" value="UniProtKB-UniRule"/>
</dbReference>
<dbReference type="HAMAP" id="MF_01043">
    <property type="entry name" value="PlsY"/>
    <property type="match status" value="1"/>
</dbReference>
<dbReference type="InterPro" id="IPR003811">
    <property type="entry name" value="G3P_acylTferase_PlsY"/>
</dbReference>
<dbReference type="NCBIfam" id="TIGR00023">
    <property type="entry name" value="glycerol-3-phosphate 1-O-acyltransferase PlsY"/>
    <property type="match status" value="1"/>
</dbReference>
<dbReference type="PANTHER" id="PTHR30309:SF0">
    <property type="entry name" value="GLYCEROL-3-PHOSPHATE ACYLTRANSFERASE-RELATED"/>
    <property type="match status" value="1"/>
</dbReference>
<dbReference type="PANTHER" id="PTHR30309">
    <property type="entry name" value="INNER MEMBRANE PROTEIN YGIH"/>
    <property type="match status" value="1"/>
</dbReference>
<dbReference type="Pfam" id="PF02660">
    <property type="entry name" value="G3P_acyltransf"/>
    <property type="match status" value="1"/>
</dbReference>
<dbReference type="SMART" id="SM01207">
    <property type="entry name" value="G3P_acyltransf"/>
    <property type="match status" value="1"/>
</dbReference>
<sequence length="205" mass="22193">MSAIAPGMILIAYLCGSISSAILVCRLCGLPDPRTSGSGNPGATNVLRIGGKGAAVAVLIFDVLKGMLPVWGAYELGVSPFWLGLIAIAACLGHIWPVFFGFKGGKGVATAFGAIAPIGWDLTGVMAGTWLLTVLLSGYSSLGAIVSALIAPFYVWWFKPQFTFPVSMLSCLILLRHHDNIQRLWRRQETKIWTKFKRKREKDPE</sequence>
<gene>
    <name evidence="1" type="primary">plsY</name>
    <name type="synonym">ygiH</name>
    <name type="ordered locus">SBO_2915</name>
</gene>
<comment type="function">
    <text evidence="1">Catalyzes the transfer of an acyl group from acyl-ACP to glycerol-3-phosphate (G3P) to form lysophosphatidic acid (LPA). This enzyme can also utilize acyl-CoA as fatty acyl donor, but not acyl-PO(4).</text>
</comment>
<comment type="catalytic activity">
    <reaction evidence="1">
        <text>sn-glycerol 3-phosphate + an acyl-CoA = a 1-acyl-sn-glycero-3-phosphate + CoA</text>
        <dbReference type="Rhea" id="RHEA:15325"/>
        <dbReference type="ChEBI" id="CHEBI:57287"/>
        <dbReference type="ChEBI" id="CHEBI:57597"/>
        <dbReference type="ChEBI" id="CHEBI:57970"/>
        <dbReference type="ChEBI" id="CHEBI:58342"/>
        <dbReference type="EC" id="2.3.1.15"/>
    </reaction>
</comment>
<comment type="catalytic activity">
    <reaction evidence="1">
        <text>a fatty acyl-[ACP] + sn-glycerol 3-phosphate = a 1-acyl-sn-glycero-3-phosphate + holo-[ACP]</text>
        <dbReference type="Rhea" id="RHEA:42300"/>
        <dbReference type="Rhea" id="RHEA-COMP:9685"/>
        <dbReference type="Rhea" id="RHEA-COMP:14125"/>
        <dbReference type="ChEBI" id="CHEBI:57597"/>
        <dbReference type="ChEBI" id="CHEBI:57970"/>
        <dbReference type="ChEBI" id="CHEBI:64479"/>
        <dbReference type="ChEBI" id="CHEBI:138651"/>
        <dbReference type="EC" id="2.3.1.n5"/>
    </reaction>
</comment>
<comment type="pathway">
    <text evidence="1">Lipid metabolism; phospholipid metabolism.</text>
</comment>
<comment type="subunit">
    <text evidence="1">Probably interacts with PlsX.</text>
</comment>
<comment type="subcellular location">
    <subcellularLocation>
        <location evidence="1">Cell inner membrane</location>
        <topology evidence="1">Multi-pass membrane protein</topology>
    </subcellularLocation>
</comment>
<comment type="similarity">
    <text evidence="1">Belongs to the PlsY family.</text>
</comment>
<evidence type="ECO:0000255" key="1">
    <source>
        <dbReference type="HAMAP-Rule" id="MF_01043"/>
    </source>
</evidence>
<proteinExistence type="inferred from homology"/>